<protein>
    <recommendedName>
        <fullName evidence="1">UDP-N-acetylmuramate--L-alanine ligase</fullName>
        <ecNumber evidence="1">6.3.2.8</ecNumber>
    </recommendedName>
    <alternativeName>
        <fullName evidence="1">UDP-N-acetylmuramoyl-L-alanine synthetase</fullName>
    </alternativeName>
</protein>
<sequence length="471" mass="50794">MKMPLNIGLVHFIGIGGIGMSGIAEVLHNLGYKVQGSDQSDSANVQRLREKGIEVFVGHKAENLGDAEVIVVSTAIKKNNPELVAAREKLLPVVRRAEMLAELMRFRRAVAIGGTHGKTTTTSLVAALLDAGHLDPTVINGGIINAYGTNARMGDGDWMVVEADESDGTFLKLPADIAVVTNIDPEHLDHYGNFDAVRAAFRQFVENVPFYGFGVMCLDHPEVQALVSRIEDRRIITYGSNPQAEVRFVNQRMDGAASLFDVVIRSRKGEATEIKDLRLPMPGLHNVSNATAAIAVAHELGISSDDIRRGLGSFGGVKRRFTHTGSWNGVEIFDDYGHHPVEIRAVLKAAREATSQAGGRVVAIVQPHRYTRLASLFDEFAACFNDADTVIVAPVYTAGEEPIEGVNSEELVSRIKTAGHRDARYATGPEALAPLVASIAQAGDFVVCLGAGNVTQWAYALPKELAEQGKK</sequence>
<gene>
    <name evidence="1" type="primary">murC</name>
    <name type="ordered locus">BR1430</name>
    <name type="ordered locus">BS1330_I1424</name>
</gene>
<organism>
    <name type="scientific">Brucella suis biovar 1 (strain 1330)</name>
    <dbReference type="NCBI Taxonomy" id="204722"/>
    <lineage>
        <taxon>Bacteria</taxon>
        <taxon>Pseudomonadati</taxon>
        <taxon>Pseudomonadota</taxon>
        <taxon>Alphaproteobacteria</taxon>
        <taxon>Hyphomicrobiales</taxon>
        <taxon>Brucellaceae</taxon>
        <taxon>Brucella/Ochrobactrum group</taxon>
        <taxon>Brucella</taxon>
    </lineage>
</organism>
<reference key="1">
    <citation type="journal article" date="2002" name="Proc. Natl. Acad. Sci. U.S.A.">
        <title>The Brucella suis genome reveals fundamental similarities between animal and plant pathogens and symbionts.</title>
        <authorList>
            <person name="Paulsen I.T."/>
            <person name="Seshadri R."/>
            <person name="Nelson K.E."/>
            <person name="Eisen J.A."/>
            <person name="Heidelberg J.F."/>
            <person name="Read T.D."/>
            <person name="Dodson R.J."/>
            <person name="Umayam L.A."/>
            <person name="Brinkac L.M."/>
            <person name="Beanan M.J."/>
            <person name="Daugherty S.C."/>
            <person name="DeBoy R.T."/>
            <person name="Durkin A.S."/>
            <person name="Kolonay J.F."/>
            <person name="Madupu R."/>
            <person name="Nelson W.C."/>
            <person name="Ayodeji B."/>
            <person name="Kraul M."/>
            <person name="Shetty J."/>
            <person name="Malek J.A."/>
            <person name="Van Aken S.E."/>
            <person name="Riedmuller S."/>
            <person name="Tettelin H."/>
            <person name="Gill S.R."/>
            <person name="White O."/>
            <person name="Salzberg S.L."/>
            <person name="Hoover D.L."/>
            <person name="Lindler L.E."/>
            <person name="Halling S.M."/>
            <person name="Boyle S.M."/>
            <person name="Fraser C.M."/>
        </authorList>
    </citation>
    <scope>NUCLEOTIDE SEQUENCE [LARGE SCALE GENOMIC DNA]</scope>
    <source>
        <strain>1330</strain>
    </source>
</reference>
<reference key="2">
    <citation type="journal article" date="2011" name="J. Bacteriol.">
        <title>Revised genome sequence of Brucella suis 1330.</title>
        <authorList>
            <person name="Tae H."/>
            <person name="Shallom S."/>
            <person name="Settlage R."/>
            <person name="Preston D."/>
            <person name="Adams L.G."/>
            <person name="Garner H.R."/>
        </authorList>
    </citation>
    <scope>NUCLEOTIDE SEQUENCE [LARGE SCALE GENOMIC DNA]</scope>
    <source>
        <strain>1330</strain>
    </source>
</reference>
<feature type="chain" id="PRO_0000182067" description="UDP-N-acetylmuramate--L-alanine ligase">
    <location>
        <begin position="1"/>
        <end position="471"/>
    </location>
</feature>
<feature type="binding site" evidence="1">
    <location>
        <begin position="114"/>
        <end position="120"/>
    </location>
    <ligand>
        <name>ATP</name>
        <dbReference type="ChEBI" id="CHEBI:30616"/>
    </ligand>
</feature>
<comment type="function">
    <text evidence="1">Cell wall formation.</text>
</comment>
<comment type="catalytic activity">
    <reaction evidence="1">
        <text>UDP-N-acetyl-alpha-D-muramate + L-alanine + ATP = UDP-N-acetyl-alpha-D-muramoyl-L-alanine + ADP + phosphate + H(+)</text>
        <dbReference type="Rhea" id="RHEA:23372"/>
        <dbReference type="ChEBI" id="CHEBI:15378"/>
        <dbReference type="ChEBI" id="CHEBI:30616"/>
        <dbReference type="ChEBI" id="CHEBI:43474"/>
        <dbReference type="ChEBI" id="CHEBI:57972"/>
        <dbReference type="ChEBI" id="CHEBI:70757"/>
        <dbReference type="ChEBI" id="CHEBI:83898"/>
        <dbReference type="ChEBI" id="CHEBI:456216"/>
        <dbReference type="EC" id="6.3.2.8"/>
    </reaction>
</comment>
<comment type="pathway">
    <text evidence="1">Cell wall biogenesis; peptidoglycan biosynthesis.</text>
</comment>
<comment type="subcellular location">
    <subcellularLocation>
        <location evidence="1">Cytoplasm</location>
    </subcellularLocation>
</comment>
<comment type="similarity">
    <text evidence="1">Belongs to the MurCDEF family.</text>
</comment>
<keyword id="KW-0067">ATP-binding</keyword>
<keyword id="KW-0131">Cell cycle</keyword>
<keyword id="KW-0132">Cell division</keyword>
<keyword id="KW-0133">Cell shape</keyword>
<keyword id="KW-0961">Cell wall biogenesis/degradation</keyword>
<keyword id="KW-0963">Cytoplasm</keyword>
<keyword id="KW-0436">Ligase</keyword>
<keyword id="KW-0547">Nucleotide-binding</keyword>
<keyword id="KW-0573">Peptidoglycan synthesis</keyword>
<proteinExistence type="inferred from homology"/>
<accession>P65469</accession>
<accession>G0KBJ0</accession>
<accession>Q8YI65</accession>
<dbReference type="EC" id="6.3.2.8" evidence="1"/>
<dbReference type="EMBL" id="AE014291">
    <property type="protein sequence ID" value="AAN30343.1"/>
    <property type="molecule type" value="Genomic_DNA"/>
</dbReference>
<dbReference type="EMBL" id="CP002997">
    <property type="protein sequence ID" value="AEM18759.1"/>
    <property type="molecule type" value="Genomic_DNA"/>
</dbReference>
<dbReference type="RefSeq" id="WP_002964538.1">
    <property type="nucleotide sequence ID" value="NZ_KN046804.1"/>
</dbReference>
<dbReference type="SMR" id="P65469"/>
<dbReference type="GeneID" id="97533364"/>
<dbReference type="KEGG" id="bms:BR1430"/>
<dbReference type="KEGG" id="bsi:BS1330_I1424"/>
<dbReference type="PATRIC" id="fig|204722.21.peg.917"/>
<dbReference type="HOGENOM" id="CLU_028104_2_2_5"/>
<dbReference type="PhylomeDB" id="P65469"/>
<dbReference type="UniPathway" id="UPA00219"/>
<dbReference type="Proteomes" id="UP000007104">
    <property type="component" value="Chromosome I"/>
</dbReference>
<dbReference type="GO" id="GO:0005737">
    <property type="term" value="C:cytoplasm"/>
    <property type="evidence" value="ECO:0007669"/>
    <property type="project" value="UniProtKB-SubCell"/>
</dbReference>
<dbReference type="GO" id="GO:0005524">
    <property type="term" value="F:ATP binding"/>
    <property type="evidence" value="ECO:0007669"/>
    <property type="project" value="UniProtKB-UniRule"/>
</dbReference>
<dbReference type="GO" id="GO:0008763">
    <property type="term" value="F:UDP-N-acetylmuramate-L-alanine ligase activity"/>
    <property type="evidence" value="ECO:0007669"/>
    <property type="project" value="UniProtKB-UniRule"/>
</dbReference>
<dbReference type="GO" id="GO:0051301">
    <property type="term" value="P:cell division"/>
    <property type="evidence" value="ECO:0007669"/>
    <property type="project" value="UniProtKB-KW"/>
</dbReference>
<dbReference type="GO" id="GO:0071555">
    <property type="term" value="P:cell wall organization"/>
    <property type="evidence" value="ECO:0007669"/>
    <property type="project" value="UniProtKB-KW"/>
</dbReference>
<dbReference type="GO" id="GO:0009252">
    <property type="term" value="P:peptidoglycan biosynthetic process"/>
    <property type="evidence" value="ECO:0007669"/>
    <property type="project" value="UniProtKB-UniRule"/>
</dbReference>
<dbReference type="GO" id="GO:0008360">
    <property type="term" value="P:regulation of cell shape"/>
    <property type="evidence" value="ECO:0007669"/>
    <property type="project" value="UniProtKB-KW"/>
</dbReference>
<dbReference type="Gene3D" id="3.90.190.20">
    <property type="entry name" value="Mur ligase, C-terminal domain"/>
    <property type="match status" value="1"/>
</dbReference>
<dbReference type="Gene3D" id="3.40.1190.10">
    <property type="entry name" value="Mur-like, catalytic domain"/>
    <property type="match status" value="1"/>
</dbReference>
<dbReference type="Gene3D" id="3.40.50.720">
    <property type="entry name" value="NAD(P)-binding Rossmann-like Domain"/>
    <property type="match status" value="1"/>
</dbReference>
<dbReference type="HAMAP" id="MF_00046">
    <property type="entry name" value="MurC"/>
    <property type="match status" value="1"/>
</dbReference>
<dbReference type="InterPro" id="IPR036565">
    <property type="entry name" value="Mur-like_cat_sf"/>
</dbReference>
<dbReference type="InterPro" id="IPR004101">
    <property type="entry name" value="Mur_ligase_C"/>
</dbReference>
<dbReference type="InterPro" id="IPR036615">
    <property type="entry name" value="Mur_ligase_C_dom_sf"/>
</dbReference>
<dbReference type="InterPro" id="IPR013221">
    <property type="entry name" value="Mur_ligase_cen"/>
</dbReference>
<dbReference type="InterPro" id="IPR000713">
    <property type="entry name" value="Mur_ligase_N"/>
</dbReference>
<dbReference type="InterPro" id="IPR050061">
    <property type="entry name" value="MurCDEF_pg_biosynth"/>
</dbReference>
<dbReference type="InterPro" id="IPR005758">
    <property type="entry name" value="UDP-N-AcMur_Ala_ligase_MurC"/>
</dbReference>
<dbReference type="NCBIfam" id="TIGR01082">
    <property type="entry name" value="murC"/>
    <property type="match status" value="1"/>
</dbReference>
<dbReference type="PANTHER" id="PTHR43445:SF3">
    <property type="entry name" value="UDP-N-ACETYLMURAMATE--L-ALANINE LIGASE"/>
    <property type="match status" value="1"/>
</dbReference>
<dbReference type="PANTHER" id="PTHR43445">
    <property type="entry name" value="UDP-N-ACETYLMURAMATE--L-ALANINE LIGASE-RELATED"/>
    <property type="match status" value="1"/>
</dbReference>
<dbReference type="Pfam" id="PF01225">
    <property type="entry name" value="Mur_ligase"/>
    <property type="match status" value="1"/>
</dbReference>
<dbReference type="Pfam" id="PF02875">
    <property type="entry name" value="Mur_ligase_C"/>
    <property type="match status" value="1"/>
</dbReference>
<dbReference type="Pfam" id="PF08245">
    <property type="entry name" value="Mur_ligase_M"/>
    <property type="match status" value="1"/>
</dbReference>
<dbReference type="SUPFAM" id="SSF51984">
    <property type="entry name" value="MurCD N-terminal domain"/>
    <property type="match status" value="1"/>
</dbReference>
<dbReference type="SUPFAM" id="SSF53623">
    <property type="entry name" value="MurD-like peptide ligases, catalytic domain"/>
    <property type="match status" value="1"/>
</dbReference>
<dbReference type="SUPFAM" id="SSF53244">
    <property type="entry name" value="MurD-like peptide ligases, peptide-binding domain"/>
    <property type="match status" value="1"/>
</dbReference>
<evidence type="ECO:0000255" key="1">
    <source>
        <dbReference type="HAMAP-Rule" id="MF_00046"/>
    </source>
</evidence>
<name>MURC_BRUSU</name>